<name>BZP50_ORYSJ</name>
<proteinExistence type="evidence at transcript level"/>
<protein>
    <recommendedName>
        <fullName evidence="7">bZIP transcription factor 50</fullName>
        <shortName evidence="7">OsbZIP50</shortName>
    </recommendedName>
    <alternativeName>
        <fullName evidence="10">OsBZIP74</fullName>
    </alternativeName>
</protein>
<reference key="1">
    <citation type="journal article" date="2005" name="Nature">
        <title>The map-based sequence of the rice genome.</title>
        <authorList>
            <consortium name="International rice genome sequencing project (IRGSP)"/>
        </authorList>
    </citation>
    <scope>NUCLEOTIDE SEQUENCE [LARGE SCALE GENOMIC DNA]</scope>
    <source>
        <strain>cv. Nipponbare</strain>
    </source>
</reference>
<reference key="2">
    <citation type="journal article" date="2008" name="Nucleic Acids Res.">
        <title>The rice annotation project database (RAP-DB): 2008 update.</title>
        <authorList>
            <consortium name="The rice annotation project (RAP)"/>
        </authorList>
    </citation>
    <scope>GENOME REANNOTATION</scope>
    <source>
        <strain>cv. Nipponbare</strain>
    </source>
</reference>
<reference key="3">
    <citation type="journal article" date="2013" name="Rice">
        <title>Improvement of the Oryza sativa Nipponbare reference genome using next generation sequence and optical map data.</title>
        <authorList>
            <person name="Kawahara Y."/>
            <person name="de la Bastide M."/>
            <person name="Hamilton J.P."/>
            <person name="Kanamori H."/>
            <person name="McCombie W.R."/>
            <person name="Ouyang S."/>
            <person name="Schwartz D.C."/>
            <person name="Tanaka T."/>
            <person name="Wu J."/>
            <person name="Zhou S."/>
            <person name="Childs K.L."/>
            <person name="Davidson R.M."/>
            <person name="Lin H."/>
            <person name="Quesada-Ocampo L."/>
            <person name="Vaillancourt B."/>
            <person name="Sakai H."/>
            <person name="Lee S.S."/>
            <person name="Kim J."/>
            <person name="Numa H."/>
            <person name="Itoh T."/>
            <person name="Buell C.R."/>
            <person name="Matsumoto T."/>
        </authorList>
    </citation>
    <scope>GENOME REANNOTATION</scope>
    <source>
        <strain>cv. Nipponbare</strain>
    </source>
</reference>
<reference key="4">
    <citation type="journal article" date="2005" name="PLoS Biol.">
        <title>The genomes of Oryza sativa: a history of duplications.</title>
        <authorList>
            <person name="Yu J."/>
            <person name="Wang J."/>
            <person name="Lin W."/>
            <person name="Li S."/>
            <person name="Li H."/>
            <person name="Zhou J."/>
            <person name="Ni P."/>
            <person name="Dong W."/>
            <person name="Hu S."/>
            <person name="Zeng C."/>
            <person name="Zhang J."/>
            <person name="Zhang Y."/>
            <person name="Li R."/>
            <person name="Xu Z."/>
            <person name="Li S."/>
            <person name="Li X."/>
            <person name="Zheng H."/>
            <person name="Cong L."/>
            <person name="Lin L."/>
            <person name="Yin J."/>
            <person name="Geng J."/>
            <person name="Li G."/>
            <person name="Shi J."/>
            <person name="Liu J."/>
            <person name="Lv H."/>
            <person name="Li J."/>
            <person name="Wang J."/>
            <person name="Deng Y."/>
            <person name="Ran L."/>
            <person name="Shi X."/>
            <person name="Wang X."/>
            <person name="Wu Q."/>
            <person name="Li C."/>
            <person name="Ren X."/>
            <person name="Wang J."/>
            <person name="Wang X."/>
            <person name="Li D."/>
            <person name="Liu D."/>
            <person name="Zhang X."/>
            <person name="Ji Z."/>
            <person name="Zhao W."/>
            <person name="Sun Y."/>
            <person name="Zhang Z."/>
            <person name="Bao J."/>
            <person name="Han Y."/>
            <person name="Dong L."/>
            <person name="Ji J."/>
            <person name="Chen P."/>
            <person name="Wu S."/>
            <person name="Liu J."/>
            <person name="Xiao Y."/>
            <person name="Bu D."/>
            <person name="Tan J."/>
            <person name="Yang L."/>
            <person name="Ye C."/>
            <person name="Zhang J."/>
            <person name="Xu J."/>
            <person name="Zhou Y."/>
            <person name="Yu Y."/>
            <person name="Zhang B."/>
            <person name="Zhuang S."/>
            <person name="Wei H."/>
            <person name="Liu B."/>
            <person name="Lei M."/>
            <person name="Yu H."/>
            <person name="Li Y."/>
            <person name="Xu H."/>
            <person name="Wei S."/>
            <person name="He X."/>
            <person name="Fang L."/>
            <person name="Zhang Z."/>
            <person name="Zhang Y."/>
            <person name="Huang X."/>
            <person name="Su Z."/>
            <person name="Tong W."/>
            <person name="Li J."/>
            <person name="Tong Z."/>
            <person name="Li S."/>
            <person name="Ye J."/>
            <person name="Wang L."/>
            <person name="Fang L."/>
            <person name="Lei T."/>
            <person name="Chen C.-S."/>
            <person name="Chen H.-C."/>
            <person name="Xu Z."/>
            <person name="Li H."/>
            <person name="Huang H."/>
            <person name="Zhang F."/>
            <person name="Xu H."/>
            <person name="Li N."/>
            <person name="Zhao C."/>
            <person name="Li S."/>
            <person name="Dong L."/>
            <person name="Huang Y."/>
            <person name="Li L."/>
            <person name="Xi Y."/>
            <person name="Qi Q."/>
            <person name="Li W."/>
            <person name="Zhang B."/>
            <person name="Hu W."/>
            <person name="Zhang Y."/>
            <person name="Tian X."/>
            <person name="Jiao Y."/>
            <person name="Liang X."/>
            <person name="Jin J."/>
            <person name="Gao L."/>
            <person name="Zheng W."/>
            <person name="Hao B."/>
            <person name="Liu S.-M."/>
            <person name="Wang W."/>
            <person name="Yuan L."/>
            <person name="Cao M."/>
            <person name="McDermott J."/>
            <person name="Samudrala R."/>
            <person name="Wang J."/>
            <person name="Wong G.K.-S."/>
            <person name="Yang H."/>
        </authorList>
    </citation>
    <scope>NUCLEOTIDE SEQUENCE [LARGE SCALE GENOMIC DNA]</scope>
    <source>
        <strain>cv. Nipponbare</strain>
    </source>
</reference>
<reference key="5">
    <citation type="journal article" date="2008" name="Plant Physiol.">
        <title>Genomic survey and gene expression analysis of the basic leucine zipper transcription factor family in rice.</title>
        <authorList>
            <person name="Nijhawan A."/>
            <person name="Jain M."/>
            <person name="Tyagi A.K."/>
            <person name="Khurana J.P."/>
        </authorList>
    </citation>
    <scope>GENE FAMILY</scope>
    <scope>NOMENCLATURE</scope>
</reference>
<reference key="6">
    <citation type="journal article" date="2011" name="Plant J.">
        <title>Expression of ER quality control-related genes in response to changes in BiP1 levels in developing rice endosperm.</title>
        <authorList>
            <person name="Wakasa Y."/>
            <person name="Yasuda H."/>
            <person name="Oono Y."/>
            <person name="Kawakatsu T."/>
            <person name="Hirose S."/>
            <person name="Takahashi H."/>
            <person name="Hayashi S."/>
            <person name="Yang L."/>
            <person name="Takaiwa F."/>
        </authorList>
    </citation>
    <scope>FUNCTION</scope>
    <scope>INDUCTION BY DITHIOTHREITOL</scope>
</reference>
<reference key="7">
    <citation type="journal article" date="2012" name="Mol. Plant">
        <title>Conservation of IRE1-regulated bZIP74 mRNA unconventional splicing in rice (Oryza sativa L.) involved in ER stress responses.</title>
        <authorList>
            <person name="Lu S.J."/>
            <person name="Yang Z.T."/>
            <person name="Sun L."/>
            <person name="Sun L."/>
            <person name="Song Z.T."/>
            <person name="Liu J.X."/>
        </authorList>
    </citation>
    <scope>FUNCTION</scope>
    <scope>ACTIVITY REGULATION</scope>
    <scope>SUBCELLULAR LOCATION</scope>
    <scope>ALTERNATIVE SPLICING</scope>
</reference>
<reference key="8">
    <citation type="journal article" date="2012" name="Plant J.">
        <title>Signal transduction by IRE1-mediated splicing of bZIP50 and other stress sensors in the endoplasmic reticulum stress response of rice.</title>
        <authorList>
            <person name="Hayashi S."/>
            <person name="Wakasa Y."/>
            <person name="Takahashi H."/>
            <person name="Kawakatsu T."/>
            <person name="Takaiwa F."/>
        </authorList>
    </citation>
    <scope>FUNCTION</scope>
    <scope>ACTIVITY REGULATION</scope>
    <scope>SUBCELLULAR LOCATION</scope>
    <scope>ALTERNATIVE SPLICING</scope>
    <scope>INDUCTION</scope>
</reference>
<dbReference type="EMBL" id="AP003539">
    <property type="protein sequence ID" value="BAD35377.1"/>
    <property type="molecule type" value="Genomic_DNA"/>
</dbReference>
<dbReference type="EMBL" id="AP008212">
    <property type="protein sequence ID" value="BAF20014.1"/>
    <property type="molecule type" value="Genomic_DNA"/>
</dbReference>
<dbReference type="EMBL" id="AP014962">
    <property type="protein sequence ID" value="BAS98675.1"/>
    <property type="molecule type" value="Genomic_DNA"/>
</dbReference>
<dbReference type="EMBL" id="CM000143">
    <property type="protein sequence ID" value="EEE66035.1"/>
    <property type="molecule type" value="Genomic_DNA"/>
</dbReference>
<dbReference type="RefSeq" id="XP_015641141.1">
    <property type="nucleotide sequence ID" value="XM_015785655.1"/>
</dbReference>
<dbReference type="SMR" id="Q69XV0"/>
<dbReference type="FunCoup" id="Q69XV0">
    <property type="interactions" value="74"/>
</dbReference>
<dbReference type="STRING" id="39947.Q69XV0"/>
<dbReference type="PaxDb" id="39947-Q69XV0"/>
<dbReference type="EnsemblPlants" id="Os06t0622700-01">
    <molecule id="Q69XV0-1"/>
    <property type="protein sequence ID" value="Os06t0622700-01"/>
    <property type="gene ID" value="Os06g0622700"/>
</dbReference>
<dbReference type="Gramene" id="Os06t0622700-01">
    <molecule id="Q69XV0-1"/>
    <property type="protein sequence ID" value="Os06t0622700-01"/>
    <property type="gene ID" value="Os06g0622700"/>
</dbReference>
<dbReference type="KEGG" id="dosa:Os06g0622700"/>
<dbReference type="eggNOG" id="KOG0017">
    <property type="taxonomic scope" value="Eukaryota"/>
</dbReference>
<dbReference type="HOGENOM" id="CLU_054669_0_0_1"/>
<dbReference type="InParanoid" id="Q69XV0"/>
<dbReference type="OMA" id="HTHERQP"/>
<dbReference type="OrthoDB" id="674948at2759"/>
<dbReference type="Proteomes" id="UP000000763">
    <property type="component" value="Chromosome 6"/>
</dbReference>
<dbReference type="Proteomes" id="UP000007752">
    <property type="component" value="Chromosome 6"/>
</dbReference>
<dbReference type="Proteomes" id="UP000059680">
    <property type="component" value="Chromosome 6"/>
</dbReference>
<dbReference type="GO" id="GO:0005789">
    <property type="term" value="C:endoplasmic reticulum membrane"/>
    <property type="evidence" value="ECO:0000314"/>
    <property type="project" value="UniProtKB"/>
</dbReference>
<dbReference type="GO" id="GO:0005634">
    <property type="term" value="C:nucleus"/>
    <property type="evidence" value="ECO:0000314"/>
    <property type="project" value="UniProtKB"/>
</dbReference>
<dbReference type="GO" id="GO:0003677">
    <property type="term" value="F:DNA binding"/>
    <property type="evidence" value="ECO:0007669"/>
    <property type="project" value="UniProtKB-KW"/>
</dbReference>
<dbReference type="GO" id="GO:0003700">
    <property type="term" value="F:DNA-binding transcription factor activity"/>
    <property type="evidence" value="ECO:0007669"/>
    <property type="project" value="InterPro"/>
</dbReference>
<dbReference type="GO" id="GO:0034976">
    <property type="term" value="P:response to endoplasmic reticulum stress"/>
    <property type="evidence" value="ECO:0000315"/>
    <property type="project" value="UniProtKB"/>
</dbReference>
<dbReference type="GO" id="GO:0006986">
    <property type="term" value="P:response to unfolded protein"/>
    <property type="evidence" value="ECO:0007669"/>
    <property type="project" value="UniProtKB-KW"/>
</dbReference>
<dbReference type="CDD" id="cd14704">
    <property type="entry name" value="bZIP_HY5-like"/>
    <property type="match status" value="1"/>
</dbReference>
<dbReference type="FunFam" id="1.20.5.170:FF:000041">
    <property type="entry name" value="Cyclic AMP-dependent transcription factor ATF-6 beta"/>
    <property type="match status" value="1"/>
</dbReference>
<dbReference type="Gene3D" id="1.20.5.170">
    <property type="match status" value="1"/>
</dbReference>
<dbReference type="InterPro" id="IPR004827">
    <property type="entry name" value="bZIP"/>
</dbReference>
<dbReference type="InterPro" id="IPR046347">
    <property type="entry name" value="bZIP_sf"/>
</dbReference>
<dbReference type="PANTHER" id="PTHR47416:SF8">
    <property type="entry name" value="BASIC-LEUCINE ZIPPER TRANSCRIPTION FACTOR E-RELATED"/>
    <property type="match status" value="1"/>
</dbReference>
<dbReference type="PANTHER" id="PTHR47416">
    <property type="entry name" value="BASIC-LEUCINE ZIPPER TRANSCRIPTION FACTOR F-RELATED"/>
    <property type="match status" value="1"/>
</dbReference>
<dbReference type="Pfam" id="PF00170">
    <property type="entry name" value="bZIP_1"/>
    <property type="match status" value="1"/>
</dbReference>
<dbReference type="SMART" id="SM00338">
    <property type="entry name" value="BRLZ"/>
    <property type="match status" value="1"/>
</dbReference>
<dbReference type="SUPFAM" id="SSF57959">
    <property type="entry name" value="Leucine zipper domain"/>
    <property type="match status" value="1"/>
</dbReference>
<dbReference type="PROSITE" id="PS50217">
    <property type="entry name" value="BZIP"/>
    <property type="match status" value="1"/>
</dbReference>
<dbReference type="PROSITE" id="PS00036">
    <property type="entry name" value="BZIP_BASIC"/>
    <property type="match status" value="1"/>
</dbReference>
<comment type="function">
    <text evidence="4 5 6">Transcription factor involved in endoplasmic reticulum (ER) stress response (PubMed:21223397, PubMed:22050533, PubMed:22199238). Acts downstream of the ER stress sensors IRE1, BZIP39 and BZIP60 to activate BiP chaperone genes (PubMed:22050533, PubMed:22199238).</text>
</comment>
<comment type="activity regulation">
    <text evidence="5 6">Transcriptionally activated by IRE1 in response to endoplasmic reticulum (ER) stress. IRE1 cleaves a 20-bp fragment causing a frameshift of the mRNA transcript, leading to a nuclear isoform of the BZIP50 activator.</text>
</comment>
<comment type="subcellular location">
    <molecule>Isoform 1</molecule>
    <subcellularLocation>
        <location evidence="5 6">Endoplasmic reticulum membrane</location>
        <topology evidence="1">Single-pass membrane protein</topology>
    </subcellularLocation>
</comment>
<comment type="subcellular location">
    <molecule>Isoform 2</molecule>
    <subcellularLocation>
        <location evidence="5 6">Nucleus</location>
    </subcellularLocation>
    <text evidence="5 6">The bZIP domain is translocated into the nucleus in response to ER stress.</text>
</comment>
<comment type="alternative products">
    <event type="alternative splicing"/>
    <isoform>
        <id>Q69XV0-1</id>
        <name>1</name>
        <name evidence="9">bZIP50u</name>
        <sequence type="displayed"/>
    </isoform>
    <isoform>
        <id>Q69XV0-2</id>
        <name>2</name>
        <name evidence="9">bZIP50s</name>
        <sequence type="described" ref="VSP_058655"/>
    </isoform>
</comment>
<comment type="induction">
    <text evidence="4 5">By dithiothreitol-induced endoplasmic reticulum (ER) stress response (PubMed:21223397, PubMed:22050533). Induced by salt stress (PubMed:22050533).</text>
</comment>
<comment type="miscellaneous">
    <molecule>Isoform 2</molecule>
    <text evidence="5 6">Potent transcriptional activator. Induced by IRE1 in response to endoplasmic reticulum stress. IRE1 cleaves a 20-bp fragment causing a frameshift of the mRNA transcript.</text>
</comment>
<comment type="similarity">
    <text evidence="11">Belongs to the bZIP family.</text>
</comment>
<keyword id="KW-0025">Alternative splicing</keyword>
<keyword id="KW-0238">DNA-binding</keyword>
<keyword id="KW-0256">Endoplasmic reticulum</keyword>
<keyword id="KW-0472">Membrane</keyword>
<keyword id="KW-0539">Nucleus</keyword>
<keyword id="KW-1185">Reference proteome</keyword>
<keyword id="KW-0804">Transcription</keyword>
<keyword id="KW-0805">Transcription regulation</keyword>
<keyword id="KW-0812">Transmembrane</keyword>
<keyword id="KW-1133">Transmembrane helix</keyword>
<keyword id="KW-0834">Unfolded protein response</keyword>
<gene>
    <name evidence="7" type="primary">BZIP50</name>
    <name evidence="8" type="synonym">BZIP60</name>
    <name evidence="10" type="synonym">BZIP74</name>
    <name evidence="13" type="ordered locus">Os06g0622700</name>
    <name evidence="11" type="ordered locus">LOC_Os06g41770</name>
    <name evidence="14" type="ORF">OsJ_22012</name>
    <name evidence="12" type="ORF">P0040H10.41</name>
</gene>
<feature type="chain" id="PRO_0000438369" description="bZIP transcription factor 50">
    <location>
        <begin position="1"/>
        <end position="304"/>
    </location>
</feature>
<feature type="topological domain" description="Cytoplasmic" evidence="11">
    <location>
        <begin position="1"/>
        <end position="222"/>
    </location>
</feature>
<feature type="transmembrane region" description="Helical" evidence="1">
    <location>
        <begin position="223"/>
        <end position="243"/>
    </location>
</feature>
<feature type="topological domain" description="Lumenal" evidence="11">
    <location>
        <begin position="244"/>
        <end position="304"/>
    </location>
</feature>
<feature type="domain" description="bZIP" evidence="2">
    <location>
        <begin position="141"/>
        <end position="203"/>
    </location>
</feature>
<feature type="region of interest" description="Disordered" evidence="3">
    <location>
        <begin position="26"/>
        <end position="60"/>
    </location>
</feature>
<feature type="region of interest" description="Disordered" evidence="3">
    <location>
        <begin position="94"/>
        <end position="163"/>
    </location>
</feature>
<feature type="region of interest" description="Basic motif" evidence="2">
    <location>
        <begin position="143"/>
        <end position="167"/>
    </location>
</feature>
<feature type="region of interest" description="Leucine-zipper" evidence="2">
    <location>
        <begin position="169"/>
        <end position="183"/>
    </location>
</feature>
<feature type="compositionally biased region" description="Low complexity" evidence="3">
    <location>
        <begin position="45"/>
        <end position="59"/>
    </location>
</feature>
<feature type="compositionally biased region" description="Acidic residues" evidence="3">
    <location>
        <begin position="127"/>
        <end position="139"/>
    </location>
</feature>
<feature type="compositionally biased region" description="Basic and acidic residues" evidence="3">
    <location>
        <begin position="150"/>
        <end position="163"/>
    </location>
</feature>
<feature type="splice variant" id="VSP_058655" description="In isoform 2.">
    <original>VLTETLPLVSLLWLVSIVCLLPVPGLPNRNPVARSSAGRDLATVTGKKTSSEQQLEETLLLHGRRCKGSRARIKLDTGPFRLAAAAC</original>
    <variation>AGFPALAGEHRLPVPDARSAQPKPGGSKQRRKRSRDGNRKEDKQ</variation>
    <location>
        <begin position="218"/>
        <end position="304"/>
    </location>
</feature>
<organism>
    <name type="scientific">Oryza sativa subsp. japonica</name>
    <name type="common">Rice</name>
    <dbReference type="NCBI Taxonomy" id="39947"/>
    <lineage>
        <taxon>Eukaryota</taxon>
        <taxon>Viridiplantae</taxon>
        <taxon>Streptophyta</taxon>
        <taxon>Embryophyta</taxon>
        <taxon>Tracheophyta</taxon>
        <taxon>Spermatophyta</taxon>
        <taxon>Magnoliopsida</taxon>
        <taxon>Liliopsida</taxon>
        <taxon>Poales</taxon>
        <taxon>Poaceae</taxon>
        <taxon>BOP clade</taxon>
        <taxon>Oryzoideae</taxon>
        <taxon>Oryzeae</taxon>
        <taxon>Oryzinae</taxon>
        <taxon>Oryza</taxon>
        <taxon>Oryza sativa</taxon>
    </lineage>
</organism>
<accession>Q69XV0</accession>
<sequence>MDVEFFADLDLDALLASFSSSAAAAGSGVSGLFAPSPPHDAEAGSPESVSSRRPSPSREAALSEIERFLMEEGPAAEEGVGAEDFFDALLVDGGEEEEEEEGKGSEAGGSTDGDSGKENEVATPDAEKEDVEAEVDGDDPMSKKKRRQMRNRDSAMKSRERKKMYVKDLETKSKYLEAECRRLSYALQCCAAENMALRQSLLKDRPVGAATAMQESAVLTETLPLVSLLWLVSIVCLLPVPGLPNRNPVARSSAGRDLATVTGKKTSSEQQLEETLLLHGRRCKGSRARIKLDTGPFRLAAAAC</sequence>
<evidence type="ECO:0000255" key="1"/>
<evidence type="ECO:0000255" key="2">
    <source>
        <dbReference type="PROSITE-ProRule" id="PRU00978"/>
    </source>
</evidence>
<evidence type="ECO:0000256" key="3">
    <source>
        <dbReference type="SAM" id="MobiDB-lite"/>
    </source>
</evidence>
<evidence type="ECO:0000269" key="4">
    <source>
    </source>
</evidence>
<evidence type="ECO:0000269" key="5">
    <source>
    </source>
</evidence>
<evidence type="ECO:0000269" key="6">
    <source>
    </source>
</evidence>
<evidence type="ECO:0000303" key="7">
    <source>
    </source>
</evidence>
<evidence type="ECO:0000303" key="8">
    <source>
    </source>
</evidence>
<evidence type="ECO:0000303" key="9">
    <source>
    </source>
</evidence>
<evidence type="ECO:0000303" key="10">
    <source>
    </source>
</evidence>
<evidence type="ECO:0000305" key="11"/>
<evidence type="ECO:0000312" key="12">
    <source>
        <dbReference type="EMBL" id="BAD35377.1"/>
    </source>
</evidence>
<evidence type="ECO:0000312" key="13">
    <source>
        <dbReference type="EMBL" id="BAF20014.1"/>
    </source>
</evidence>
<evidence type="ECO:0000312" key="14">
    <source>
        <dbReference type="EMBL" id="EEE66035.1"/>
    </source>
</evidence>